<protein>
    <recommendedName>
        <fullName>Metallothionein-like protein 1</fullName>
        <shortName>MT-1</shortName>
    </recommendedName>
</protein>
<evidence type="ECO:0000305" key="1"/>
<proteinExistence type="evidence at transcript level"/>
<keyword id="KW-0479">Metal-binding</keyword>
<keyword id="KW-0480">Metal-thiolate cluster</keyword>
<keyword id="KW-1185">Reference proteome</keyword>
<feature type="chain" id="PRO_0000197384" description="Metallothionein-like protein 1">
    <location>
        <begin position="1"/>
        <end position="75"/>
    </location>
</feature>
<name>MT1_WHEAT</name>
<dbReference type="EMBL" id="L11879">
    <property type="protein sequence ID" value="AAA50846.1"/>
    <property type="molecule type" value="mRNA"/>
</dbReference>
<dbReference type="PIR" id="JQ2358">
    <property type="entry name" value="JQ2358"/>
</dbReference>
<dbReference type="RefSeq" id="NP_001392631.1">
    <property type="nucleotide sequence ID" value="NM_001405702.1"/>
</dbReference>
<dbReference type="STRING" id="4565.P43400"/>
<dbReference type="EnsemblPlants" id="TraesARI1A03G00044840.1">
    <property type="protein sequence ID" value="TraesARI1A03G00044840.1"/>
    <property type="gene ID" value="TraesARI1A03G00044840"/>
</dbReference>
<dbReference type="EnsemblPlants" id="TraesARI4B03G02319160.1">
    <property type="protein sequence ID" value="TraesARI4B03G02319160.1"/>
    <property type="gene ID" value="TraesARI4B03G02319160"/>
</dbReference>
<dbReference type="EnsemblPlants" id="TraesCAD_scaffold_000655_01G000200.1">
    <property type="protein sequence ID" value="TraesCAD_scaffold_000655_01G000200.1"/>
    <property type="gene ID" value="TraesCAD_scaffold_000655_01G000200"/>
</dbReference>
<dbReference type="EnsemblPlants" id="TraesCAD_scaffold_005023_01G000100.1">
    <property type="protein sequence ID" value="TraesCAD_scaffold_005023_01G000100.1"/>
    <property type="gene ID" value="TraesCAD_scaffold_005023_01G000100"/>
</dbReference>
<dbReference type="EnsemblPlants" id="TraesCAD_scaffold_087905_01G000100.1">
    <property type="protein sequence ID" value="TraesCAD_scaffold_087905_01G000100.1"/>
    <property type="gene ID" value="TraesCAD_scaffold_087905_01G000100"/>
</dbReference>
<dbReference type="EnsemblPlants" id="TraesCLE_scaffold_029697_01G000100.1">
    <property type="protein sequence ID" value="TraesCLE_scaffold_029697_01G000100.1"/>
    <property type="gene ID" value="TraesCLE_scaffold_029697_01G000100"/>
</dbReference>
<dbReference type="EnsemblPlants" id="TraesCLE_scaffold_041488_01G000100.1">
    <property type="protein sequence ID" value="TraesCLE_scaffold_041488_01G000100.1"/>
    <property type="gene ID" value="TraesCLE_scaffold_041488_01G000100"/>
</dbReference>
<dbReference type="EnsemblPlants" id="TraesCLE_scaffold_100302_01G000200.1">
    <property type="protein sequence ID" value="TraesCLE_scaffold_100302_01G000200.1"/>
    <property type="gene ID" value="TraesCLE_scaffold_100302_01G000200"/>
</dbReference>
<dbReference type="EnsemblPlants" id="TraesCS1A02G115900.1">
    <property type="protein sequence ID" value="TraesCS1A02G115900.1"/>
    <property type="gene ID" value="TraesCS1A02G115900"/>
</dbReference>
<dbReference type="EnsemblPlants" id="TraesCS1A03G0283800.1">
    <property type="protein sequence ID" value="TraesCS1A03G0283800.1.CDS"/>
    <property type="gene ID" value="TraesCS1A03G0283800"/>
</dbReference>
<dbReference type="EnsemblPlants" id="TraesCS4B02G142200.1">
    <property type="protein sequence ID" value="TraesCS4B02G142200.1"/>
    <property type="gene ID" value="TraesCS4B02G142200"/>
</dbReference>
<dbReference type="EnsemblPlants" id="TraesCS4B03G0333100.1">
    <property type="protein sequence ID" value="TraesCS4B03G0333100.1.CDS"/>
    <property type="gene ID" value="TraesCS4B03G0333100"/>
</dbReference>
<dbReference type="EnsemblPlants" id="TraesCS4D02G137000.1">
    <property type="protein sequence ID" value="TraesCS4D02G137000.1"/>
    <property type="gene ID" value="TraesCS4D02G137000"/>
</dbReference>
<dbReference type="EnsemblPlants" id="TraesCS4D03G0270600.1">
    <property type="protein sequence ID" value="TraesCS4D03G0270600.1.CDS"/>
    <property type="gene ID" value="TraesCS4D03G0270600"/>
</dbReference>
<dbReference type="EnsemblPlants" id="TraesJAG1A03G00044300.1">
    <property type="protein sequence ID" value="TraesJAG1A03G00044300.1"/>
    <property type="gene ID" value="TraesJAG1A03G00044300"/>
</dbReference>
<dbReference type="EnsemblPlants" id="TraesJAG4B03G02282550.1">
    <property type="protein sequence ID" value="TraesJAG4B03G02282550.1"/>
    <property type="gene ID" value="TraesJAG4B03G02282550"/>
</dbReference>
<dbReference type="EnsemblPlants" id="TraesJAG4D03G02455250.1">
    <property type="protein sequence ID" value="TraesJAG4D03G02455250.1"/>
    <property type="gene ID" value="TraesJAG4D03G02455250"/>
</dbReference>
<dbReference type="EnsemblPlants" id="TraesJUL1A03G00045570.1">
    <property type="protein sequence ID" value="TraesJUL1A03G00045570.1"/>
    <property type="gene ID" value="TraesJUL1A03G00045570"/>
</dbReference>
<dbReference type="EnsemblPlants" id="TraesJUL4B03G02303220.1">
    <property type="protein sequence ID" value="TraesJUL4B03G02303220.1"/>
    <property type="gene ID" value="TraesJUL4B03G02303220"/>
</dbReference>
<dbReference type="EnsemblPlants" id="TraesJUL4D03G02476770.1">
    <property type="protein sequence ID" value="TraesJUL4D03G02476770.1"/>
    <property type="gene ID" value="TraesJUL4D03G02476770"/>
</dbReference>
<dbReference type="EnsemblPlants" id="TraesKAR1A01G0083410.1">
    <property type="protein sequence ID" value="cds.TraesKAR1A01G0083410.1"/>
    <property type="gene ID" value="TraesKAR1A01G0083410"/>
</dbReference>
<dbReference type="EnsemblPlants" id="TraesKAR4B01G0123430.1">
    <property type="protein sequence ID" value="cds.TraesKAR4B01G0123430.1"/>
    <property type="gene ID" value="TraesKAR4B01G0123430"/>
</dbReference>
<dbReference type="EnsemblPlants" id="TraesKAR4D01G0091540.1">
    <property type="protein sequence ID" value="cds.TraesKAR4D01G0091540.1"/>
    <property type="gene ID" value="TraesKAR4D01G0091540"/>
</dbReference>
<dbReference type="EnsemblPlants" id="TraesLAC1A03G00045900.1">
    <property type="protein sequence ID" value="TraesLAC1A03G00045900.1"/>
    <property type="gene ID" value="TraesLAC1A03G00045900"/>
</dbReference>
<dbReference type="EnsemblPlants" id="TraesLAC4D03G02410950.1">
    <property type="protein sequence ID" value="TraesLAC4D03G02410950.1"/>
    <property type="gene ID" value="TraesLAC4D03G02410950"/>
</dbReference>
<dbReference type="EnsemblPlants" id="TraesLDM1A03G00045190.1">
    <property type="protein sequence ID" value="TraesLDM1A03G00045190.1"/>
    <property type="gene ID" value="TraesLDM1A03G00045190"/>
</dbReference>
<dbReference type="EnsemblPlants" id="TraesLDM4B03G02283290.1">
    <property type="protein sequence ID" value="TraesLDM4B03G02283290.1"/>
    <property type="gene ID" value="TraesLDM4B03G02283290"/>
</dbReference>
<dbReference type="EnsemblPlants" id="TraesLDM4D03G02460000.1">
    <property type="protein sequence ID" value="TraesLDM4D03G02460000.1"/>
    <property type="gene ID" value="TraesLDM4D03G02460000"/>
</dbReference>
<dbReference type="EnsemblPlants" id="TraesMAC1A03G00044820.1">
    <property type="protein sequence ID" value="TraesMAC1A03G00044820.1"/>
    <property type="gene ID" value="TraesMAC1A03G00044820"/>
</dbReference>
<dbReference type="EnsemblPlants" id="TraesMAC4B03G02282630.1">
    <property type="protein sequence ID" value="TraesMAC4B03G02282630.1"/>
    <property type="gene ID" value="TraesMAC4B03G02282630"/>
</dbReference>
<dbReference type="EnsemblPlants" id="TraesNOR1A03G00044340.1">
    <property type="protein sequence ID" value="TraesNOR1A03G00044340.1"/>
    <property type="gene ID" value="TraesNOR1A03G00044340"/>
</dbReference>
<dbReference type="EnsemblPlants" id="TraesNOR4B03G02300330.1">
    <property type="protein sequence ID" value="TraesNOR4B03G02300330.1"/>
    <property type="gene ID" value="TraesNOR4B03G02300330"/>
</dbReference>
<dbReference type="EnsemblPlants" id="TraesNOR4D03G02475400.1">
    <property type="protein sequence ID" value="TraesNOR4D03G02475400.1"/>
    <property type="gene ID" value="TraesNOR4D03G02475400"/>
</dbReference>
<dbReference type="EnsemblPlants" id="TraesPARA_EIv1.0_0075290.1">
    <property type="protein sequence ID" value="TraesPARA_EIv1.0_0075290.1.CDS"/>
    <property type="gene ID" value="TraesPARA_EIv1.0_0075290"/>
</dbReference>
<dbReference type="EnsemblPlants" id="TraesPARA_EIv1.0_1340270.1">
    <property type="protein sequence ID" value="TraesPARA_EIv1.0_1340270.1.CDS"/>
    <property type="gene ID" value="TraesPARA_EIv1.0_1340270"/>
</dbReference>
<dbReference type="EnsemblPlants" id="TraesPARA_EIv1.0_1436010.1">
    <property type="protein sequence ID" value="TraesPARA_EIv1.0_1436010.1.CDS"/>
    <property type="gene ID" value="TraesPARA_EIv1.0_1436010"/>
</dbReference>
<dbReference type="EnsemblPlants" id="TraesPARA_EIv1.0_1436010.2">
    <property type="protein sequence ID" value="TraesPARA_EIv1.0_1436010.2.CDS"/>
    <property type="gene ID" value="TraesPARA_EIv1.0_1436010"/>
</dbReference>
<dbReference type="EnsemblPlants" id="TraesPARA_EIv1.0_1436010.3">
    <property type="protein sequence ID" value="TraesPARA_EIv1.0_1436010.3.CDS"/>
    <property type="gene ID" value="TraesPARA_EIv1.0_1436010"/>
</dbReference>
<dbReference type="EnsemblPlants" id="TraesRN4B0100347500.1">
    <property type="protein sequence ID" value="TraesRN4B0100347500.1"/>
    <property type="gene ID" value="TraesRN4B0100347500"/>
</dbReference>
<dbReference type="EnsemblPlants" id="TraesRN4D0100280400.1">
    <property type="protein sequence ID" value="TraesRN4D0100280400.1"/>
    <property type="gene ID" value="TraesRN4D0100280400"/>
</dbReference>
<dbReference type="EnsemblPlants" id="TraesROB_scaffold_011529_01G000100.1">
    <property type="protein sequence ID" value="TraesROB_scaffold_011529_01G000100.1"/>
    <property type="gene ID" value="TraesROB_scaffold_011529_01G000100"/>
</dbReference>
<dbReference type="EnsemblPlants" id="TraesROB_scaffold_058800_01G000200.1">
    <property type="protein sequence ID" value="TraesROB_scaffold_058800_01G000200.1"/>
    <property type="gene ID" value="TraesROB_scaffold_058800_01G000200"/>
</dbReference>
<dbReference type="EnsemblPlants" id="TraesROB_scaffold_113845_01G000100.1">
    <property type="protein sequence ID" value="TraesROB_scaffold_113845_01G000100.1"/>
    <property type="gene ID" value="TraesROB_scaffold_113845_01G000100"/>
</dbReference>
<dbReference type="EnsemblPlants" id="TraesSTA1A03G00043570.1">
    <property type="protein sequence ID" value="TraesSTA1A03G00043570.1"/>
    <property type="gene ID" value="TraesSTA1A03G00043570"/>
</dbReference>
<dbReference type="EnsemblPlants" id="TraesSYM1A03G00045580.1">
    <property type="protein sequence ID" value="TraesSYM1A03G00045580.1"/>
    <property type="gene ID" value="TraesSYM1A03G00045580"/>
</dbReference>
<dbReference type="EnsemblPlants" id="TraesWEE_scaffold_003285_01G000200.1">
    <property type="protein sequence ID" value="TraesWEE_scaffold_003285_01G000200.1"/>
    <property type="gene ID" value="TraesWEE_scaffold_003285_01G000200"/>
</dbReference>
<dbReference type="EnsemblPlants" id="TraesWEE_scaffold_051094_01G000200.1">
    <property type="protein sequence ID" value="TraesWEE_scaffold_051094_01G000200.1"/>
    <property type="gene ID" value="TraesWEE_scaffold_051094_01G000200"/>
</dbReference>
<dbReference type="EnsemblPlants" id="TraesWEE_scaffold_074754_01G000100.1">
    <property type="protein sequence ID" value="TraesWEE_scaffold_074754_01G000100.1"/>
    <property type="gene ID" value="TraesWEE_scaffold_074754_01G000100"/>
</dbReference>
<dbReference type="GeneID" id="543163"/>
<dbReference type="Gramene" id="TraesARI1A03G00044840.1">
    <property type="protein sequence ID" value="TraesARI1A03G00044840.1"/>
    <property type="gene ID" value="TraesARI1A03G00044840"/>
</dbReference>
<dbReference type="Gramene" id="TraesARI4B03G02319160.1">
    <property type="protein sequence ID" value="TraesARI4B03G02319160.1"/>
    <property type="gene ID" value="TraesARI4B03G02319160"/>
</dbReference>
<dbReference type="Gramene" id="TraesCAD_scaffold_000655_01G000200.1">
    <property type="protein sequence ID" value="TraesCAD_scaffold_000655_01G000200.1"/>
    <property type="gene ID" value="TraesCAD_scaffold_000655_01G000200"/>
</dbReference>
<dbReference type="Gramene" id="TraesCAD_scaffold_005023_01G000100.1">
    <property type="protein sequence ID" value="TraesCAD_scaffold_005023_01G000100.1"/>
    <property type="gene ID" value="TraesCAD_scaffold_005023_01G000100"/>
</dbReference>
<dbReference type="Gramene" id="TraesCAD_scaffold_087905_01G000100.1">
    <property type="protein sequence ID" value="TraesCAD_scaffold_087905_01G000100.1"/>
    <property type="gene ID" value="TraesCAD_scaffold_087905_01G000100"/>
</dbReference>
<dbReference type="Gramene" id="TraesCLE_scaffold_029697_01G000100.1">
    <property type="protein sequence ID" value="TraesCLE_scaffold_029697_01G000100.1"/>
    <property type="gene ID" value="TraesCLE_scaffold_029697_01G000100"/>
</dbReference>
<dbReference type="Gramene" id="TraesCLE_scaffold_041488_01G000100.1">
    <property type="protein sequence ID" value="TraesCLE_scaffold_041488_01G000100.1"/>
    <property type="gene ID" value="TraesCLE_scaffold_041488_01G000100"/>
</dbReference>
<dbReference type="Gramene" id="TraesCLE_scaffold_100302_01G000200.1">
    <property type="protein sequence ID" value="TraesCLE_scaffold_100302_01G000200.1"/>
    <property type="gene ID" value="TraesCLE_scaffold_100302_01G000200"/>
</dbReference>
<dbReference type="Gramene" id="TraesCS1A02G115900.1">
    <property type="protein sequence ID" value="TraesCS1A02G115900.1"/>
    <property type="gene ID" value="TraesCS1A02G115900"/>
</dbReference>
<dbReference type="Gramene" id="TraesCS1A03G0283800.1">
    <property type="protein sequence ID" value="TraesCS1A03G0283800.1.CDS"/>
    <property type="gene ID" value="TraesCS1A03G0283800"/>
</dbReference>
<dbReference type="Gramene" id="TraesCS4B02G142200.1">
    <property type="protein sequence ID" value="TraesCS4B02G142200.1"/>
    <property type="gene ID" value="TraesCS4B02G142200"/>
</dbReference>
<dbReference type="Gramene" id="TraesCS4B03G0333100.1">
    <property type="protein sequence ID" value="TraesCS4B03G0333100.1.CDS"/>
    <property type="gene ID" value="TraesCS4B03G0333100"/>
</dbReference>
<dbReference type="Gramene" id="TraesCS4D02G137000.1">
    <property type="protein sequence ID" value="TraesCS4D02G137000.1"/>
    <property type="gene ID" value="TraesCS4D02G137000"/>
</dbReference>
<dbReference type="Gramene" id="TraesCS4D03G0270600.1">
    <property type="protein sequence ID" value="TraesCS4D03G0270600.1.CDS"/>
    <property type="gene ID" value="TraesCS4D03G0270600"/>
</dbReference>
<dbReference type="Gramene" id="TraesJAG1A03G00044300.1">
    <property type="protein sequence ID" value="TraesJAG1A03G00044300.1"/>
    <property type="gene ID" value="TraesJAG1A03G00044300"/>
</dbReference>
<dbReference type="Gramene" id="TraesJAG4B03G02282550.1">
    <property type="protein sequence ID" value="TraesJAG4B03G02282550.1"/>
    <property type="gene ID" value="TraesJAG4B03G02282550"/>
</dbReference>
<dbReference type="Gramene" id="TraesJAG4D03G02455250.1">
    <property type="protein sequence ID" value="TraesJAG4D03G02455250.1"/>
    <property type="gene ID" value="TraesJAG4D03G02455250"/>
</dbReference>
<dbReference type="Gramene" id="TraesJUL1A03G00045570.1">
    <property type="protein sequence ID" value="TraesJUL1A03G00045570.1"/>
    <property type="gene ID" value="TraesJUL1A03G00045570"/>
</dbReference>
<dbReference type="Gramene" id="TraesJUL4B03G02303220.1">
    <property type="protein sequence ID" value="TraesJUL4B03G02303220.1"/>
    <property type="gene ID" value="TraesJUL4B03G02303220"/>
</dbReference>
<dbReference type="Gramene" id="TraesJUL4D03G02476770.1">
    <property type="protein sequence ID" value="TraesJUL4D03G02476770.1"/>
    <property type="gene ID" value="TraesJUL4D03G02476770"/>
</dbReference>
<dbReference type="Gramene" id="TraesKAR1A01G0083410.1">
    <property type="protein sequence ID" value="cds.TraesKAR1A01G0083410.1"/>
    <property type="gene ID" value="TraesKAR1A01G0083410"/>
</dbReference>
<dbReference type="Gramene" id="TraesKAR4B01G0123430.1">
    <property type="protein sequence ID" value="cds.TraesKAR4B01G0123430.1"/>
    <property type="gene ID" value="TraesKAR4B01G0123430"/>
</dbReference>
<dbReference type="Gramene" id="TraesKAR4D01G0091540.1">
    <property type="protein sequence ID" value="cds.TraesKAR4D01G0091540.1"/>
    <property type="gene ID" value="TraesKAR4D01G0091540"/>
</dbReference>
<dbReference type="Gramene" id="TraesLAC1A03G00045900.1">
    <property type="protein sequence ID" value="TraesLAC1A03G00045900.1"/>
    <property type="gene ID" value="TraesLAC1A03G00045900"/>
</dbReference>
<dbReference type="Gramene" id="TraesLAC4D03G02410950.1">
    <property type="protein sequence ID" value="TraesLAC4D03G02410950.1"/>
    <property type="gene ID" value="TraesLAC4D03G02410950"/>
</dbReference>
<dbReference type="Gramene" id="TraesLDM1A03G00045190.1">
    <property type="protein sequence ID" value="TraesLDM1A03G00045190.1"/>
    <property type="gene ID" value="TraesLDM1A03G00045190"/>
</dbReference>
<dbReference type="Gramene" id="TraesLDM4B03G02283290.1">
    <property type="protein sequence ID" value="TraesLDM4B03G02283290.1"/>
    <property type="gene ID" value="TraesLDM4B03G02283290"/>
</dbReference>
<dbReference type="Gramene" id="TraesLDM4D03G02460000.1">
    <property type="protein sequence ID" value="TraesLDM4D03G02460000.1"/>
    <property type="gene ID" value="TraesLDM4D03G02460000"/>
</dbReference>
<dbReference type="Gramene" id="TraesMAC1A03G00044820.1">
    <property type="protein sequence ID" value="TraesMAC1A03G00044820.1"/>
    <property type="gene ID" value="TraesMAC1A03G00044820"/>
</dbReference>
<dbReference type="Gramene" id="TraesMAC4B03G02282630.1">
    <property type="protein sequence ID" value="TraesMAC4B03G02282630.1"/>
    <property type="gene ID" value="TraesMAC4B03G02282630"/>
</dbReference>
<dbReference type="Gramene" id="TraesNOR1A03G00044340.1">
    <property type="protein sequence ID" value="TraesNOR1A03G00044340.1"/>
    <property type="gene ID" value="TraesNOR1A03G00044340"/>
</dbReference>
<dbReference type="Gramene" id="TraesNOR4B03G02300330.1">
    <property type="protein sequence ID" value="TraesNOR4B03G02300330.1"/>
    <property type="gene ID" value="TraesNOR4B03G02300330"/>
</dbReference>
<dbReference type="Gramene" id="TraesNOR4D03G02475400.1">
    <property type="protein sequence ID" value="TraesNOR4D03G02475400.1"/>
    <property type="gene ID" value="TraesNOR4D03G02475400"/>
</dbReference>
<dbReference type="Gramene" id="TraesPARA_EIv1.0_0075290.1">
    <property type="protein sequence ID" value="TraesPARA_EIv1.0_0075290.1.CDS"/>
    <property type="gene ID" value="TraesPARA_EIv1.0_0075290"/>
</dbReference>
<dbReference type="Gramene" id="TraesPARA_EIv1.0_1340270.1">
    <property type="protein sequence ID" value="TraesPARA_EIv1.0_1340270.1.CDS"/>
    <property type="gene ID" value="TraesPARA_EIv1.0_1340270"/>
</dbReference>
<dbReference type="Gramene" id="TraesPARA_EIv1.0_1436010.1">
    <property type="protein sequence ID" value="TraesPARA_EIv1.0_1436010.1.CDS"/>
    <property type="gene ID" value="TraesPARA_EIv1.0_1436010"/>
</dbReference>
<dbReference type="Gramene" id="TraesPARA_EIv1.0_1436010.2">
    <property type="protein sequence ID" value="TraesPARA_EIv1.0_1436010.2.CDS"/>
    <property type="gene ID" value="TraesPARA_EIv1.0_1436010"/>
</dbReference>
<dbReference type="Gramene" id="TraesPARA_EIv1.0_1436010.3">
    <property type="protein sequence ID" value="TraesPARA_EIv1.0_1436010.3.CDS"/>
    <property type="gene ID" value="TraesPARA_EIv1.0_1436010"/>
</dbReference>
<dbReference type="Gramene" id="TraesRN4B0100347500.1">
    <property type="protein sequence ID" value="TraesRN4B0100347500.1"/>
    <property type="gene ID" value="TraesRN4B0100347500"/>
</dbReference>
<dbReference type="Gramene" id="TraesRN4D0100280400.1">
    <property type="protein sequence ID" value="TraesRN4D0100280400.1"/>
    <property type="gene ID" value="TraesRN4D0100280400"/>
</dbReference>
<dbReference type="Gramene" id="TraesROB_scaffold_011529_01G000100.1">
    <property type="protein sequence ID" value="TraesROB_scaffold_011529_01G000100.1"/>
    <property type="gene ID" value="TraesROB_scaffold_011529_01G000100"/>
</dbReference>
<dbReference type="Gramene" id="TraesROB_scaffold_058800_01G000200.1">
    <property type="protein sequence ID" value="TraesROB_scaffold_058800_01G000200.1"/>
    <property type="gene ID" value="TraesROB_scaffold_058800_01G000200"/>
</dbReference>
<dbReference type="Gramene" id="TraesROB_scaffold_113845_01G000100.1">
    <property type="protein sequence ID" value="TraesROB_scaffold_113845_01G000100.1"/>
    <property type="gene ID" value="TraesROB_scaffold_113845_01G000100"/>
</dbReference>
<dbReference type="Gramene" id="TraesSTA1A03G00043570.1">
    <property type="protein sequence ID" value="TraesSTA1A03G00043570.1"/>
    <property type="gene ID" value="TraesSTA1A03G00043570"/>
</dbReference>
<dbReference type="Gramene" id="TraesSYM1A03G00045580.1">
    <property type="protein sequence ID" value="TraesSYM1A03G00045580.1"/>
    <property type="gene ID" value="TraesSYM1A03G00045580"/>
</dbReference>
<dbReference type="Gramene" id="TraesWEE_scaffold_003285_01G000200.1">
    <property type="protein sequence ID" value="TraesWEE_scaffold_003285_01G000200.1"/>
    <property type="gene ID" value="TraesWEE_scaffold_003285_01G000200"/>
</dbReference>
<dbReference type="Gramene" id="TraesWEE_scaffold_051094_01G000200.1">
    <property type="protein sequence ID" value="TraesWEE_scaffold_051094_01G000200.1"/>
    <property type="gene ID" value="TraesWEE_scaffold_051094_01G000200"/>
</dbReference>
<dbReference type="Gramene" id="TraesWEE_scaffold_074754_01G000100.1">
    <property type="protein sequence ID" value="TraesWEE_scaffold_074754_01G000100.1"/>
    <property type="gene ID" value="TraesWEE_scaffold_074754_01G000100"/>
</dbReference>
<dbReference type="OMA" id="SETAHGC"/>
<dbReference type="OrthoDB" id="678987at2759"/>
<dbReference type="Proteomes" id="UP000019116">
    <property type="component" value="Chromosome 1A"/>
</dbReference>
<dbReference type="Proteomes" id="UP000019116">
    <property type="component" value="Chromosome 4B"/>
</dbReference>
<dbReference type="Proteomes" id="UP000019116">
    <property type="component" value="Chromosome 4D"/>
</dbReference>
<dbReference type="ExpressionAtlas" id="P43400">
    <property type="expression patterns" value="baseline and differential"/>
</dbReference>
<dbReference type="GO" id="GO:0046872">
    <property type="term" value="F:metal ion binding"/>
    <property type="evidence" value="ECO:0007669"/>
    <property type="project" value="UniProtKB-KW"/>
</dbReference>
<dbReference type="InterPro" id="IPR000347">
    <property type="entry name" value="Metalthion_15p"/>
</dbReference>
<dbReference type="PANTHER" id="PTHR33543:SF7">
    <property type="entry name" value="METALLOTHIONEIN-LIKE PROTEIN 1"/>
    <property type="match status" value="1"/>
</dbReference>
<dbReference type="PANTHER" id="PTHR33543">
    <property type="entry name" value="METALLOTHIONEIN-LIKE PROTEIN 2A"/>
    <property type="match status" value="1"/>
</dbReference>
<dbReference type="Pfam" id="PF01439">
    <property type="entry name" value="Metallothio_2"/>
    <property type="match status" value="1"/>
</dbReference>
<accession>P43400</accession>
<sequence length="75" mass="7376">MSCNCGSGCSCGSDCKCGKMYPDLTEQGSAAAQVAAVVVLGVAPENKAGQFEVAAGQSGEGCSCGDNCKCNPCNC</sequence>
<comment type="function">
    <text>Metallothioneins have a high content of cysteine residues that bind various heavy metals.</text>
</comment>
<comment type="induction">
    <text>By aluminum.</text>
</comment>
<comment type="similarity">
    <text evidence="1">Belongs to the metallothionein superfamily. Type 15 family.</text>
</comment>
<reference key="1">
    <citation type="journal article" date="1993" name="Plant Physiol.">
        <title>Five genes induced by aluminum in wheat (Triticum aestivum L.) roots.</title>
        <authorList>
            <person name="Snowden K.C."/>
            <person name="Gardner R.C."/>
        </authorList>
    </citation>
    <scope>NUCLEOTIDE SEQUENCE [MRNA]</scope>
    <source>
        <strain>cv. Warigal</strain>
        <tissue>Root tip</tissue>
    </source>
</reference>
<organism>
    <name type="scientific">Triticum aestivum</name>
    <name type="common">Wheat</name>
    <dbReference type="NCBI Taxonomy" id="4565"/>
    <lineage>
        <taxon>Eukaryota</taxon>
        <taxon>Viridiplantae</taxon>
        <taxon>Streptophyta</taxon>
        <taxon>Embryophyta</taxon>
        <taxon>Tracheophyta</taxon>
        <taxon>Spermatophyta</taxon>
        <taxon>Magnoliopsida</taxon>
        <taxon>Liliopsida</taxon>
        <taxon>Poales</taxon>
        <taxon>Poaceae</taxon>
        <taxon>BOP clade</taxon>
        <taxon>Pooideae</taxon>
        <taxon>Triticodae</taxon>
        <taxon>Triticeae</taxon>
        <taxon>Triticinae</taxon>
        <taxon>Triticum</taxon>
    </lineage>
</organism>
<gene>
    <name type="primary">ALI1</name>
</gene>